<protein>
    <recommendedName>
        <fullName evidence="1">Uridylate kinase</fullName>
        <shortName evidence="1">UK</shortName>
        <ecNumber evidence="1">2.7.4.22</ecNumber>
    </recommendedName>
    <alternativeName>
        <fullName evidence="1">Uridine monophosphate kinase</fullName>
        <shortName evidence="1">UMP kinase</shortName>
        <shortName evidence="1">UMPK</shortName>
    </alternativeName>
</protein>
<feature type="chain" id="PRO_0000323991" description="Uridylate kinase">
    <location>
        <begin position="1"/>
        <end position="234"/>
    </location>
</feature>
<feature type="binding site" evidence="1">
    <location>
        <begin position="10"/>
        <end position="11"/>
    </location>
    <ligand>
        <name>ATP</name>
        <dbReference type="ChEBI" id="CHEBI:30616"/>
    </ligand>
</feature>
<feature type="binding site" evidence="1">
    <location>
        <position position="44"/>
    </location>
    <ligand>
        <name>UMP</name>
        <dbReference type="ChEBI" id="CHEBI:57865"/>
    </ligand>
</feature>
<feature type="binding site" evidence="1">
    <location>
        <position position="45"/>
    </location>
    <ligand>
        <name>ATP</name>
        <dbReference type="ChEBI" id="CHEBI:30616"/>
    </ligand>
</feature>
<feature type="binding site" evidence="1">
    <location>
        <position position="49"/>
    </location>
    <ligand>
        <name>ATP</name>
        <dbReference type="ChEBI" id="CHEBI:30616"/>
    </ligand>
</feature>
<feature type="binding site" evidence="1">
    <location>
        <position position="66"/>
    </location>
    <ligand>
        <name>UMP</name>
        <dbReference type="ChEBI" id="CHEBI:57865"/>
    </ligand>
</feature>
<feature type="binding site" evidence="1">
    <location>
        <begin position="114"/>
        <end position="120"/>
    </location>
    <ligand>
        <name>UMP</name>
        <dbReference type="ChEBI" id="CHEBI:57865"/>
    </ligand>
</feature>
<feature type="binding site" evidence="1">
    <location>
        <position position="140"/>
    </location>
    <ligand>
        <name>ATP</name>
        <dbReference type="ChEBI" id="CHEBI:30616"/>
    </ligand>
</feature>
<feature type="binding site" evidence="1">
    <location>
        <position position="146"/>
    </location>
    <ligand>
        <name>ATP</name>
        <dbReference type="ChEBI" id="CHEBI:30616"/>
    </ligand>
</feature>
<feature type="binding site" evidence="1">
    <location>
        <position position="149"/>
    </location>
    <ligand>
        <name>ATP</name>
        <dbReference type="ChEBI" id="CHEBI:30616"/>
    </ligand>
</feature>
<keyword id="KW-0067">ATP-binding</keyword>
<keyword id="KW-0963">Cytoplasm</keyword>
<keyword id="KW-0418">Kinase</keyword>
<keyword id="KW-0547">Nucleotide-binding</keyword>
<keyword id="KW-0665">Pyrimidine biosynthesis</keyword>
<keyword id="KW-0808">Transferase</keyword>
<name>PYRH_METMJ</name>
<accession>A3CUB9</accession>
<dbReference type="EC" id="2.7.4.22" evidence="1"/>
<dbReference type="EMBL" id="CP000562">
    <property type="protein sequence ID" value="ABN56969.1"/>
    <property type="molecule type" value="Genomic_DNA"/>
</dbReference>
<dbReference type="RefSeq" id="WP_011843880.1">
    <property type="nucleotide sequence ID" value="NC_009051.1"/>
</dbReference>
<dbReference type="SMR" id="A3CUB9"/>
<dbReference type="STRING" id="368407.Memar_1036"/>
<dbReference type="GeneID" id="4846581"/>
<dbReference type="GeneID" id="76731606"/>
<dbReference type="KEGG" id="mem:Memar_1036"/>
<dbReference type="eggNOG" id="arCOG00858">
    <property type="taxonomic scope" value="Archaea"/>
</dbReference>
<dbReference type="HOGENOM" id="CLU_079546_0_0_2"/>
<dbReference type="OrthoDB" id="372251at2157"/>
<dbReference type="UniPathway" id="UPA00159">
    <property type="reaction ID" value="UER00275"/>
</dbReference>
<dbReference type="Proteomes" id="UP000002146">
    <property type="component" value="Chromosome"/>
</dbReference>
<dbReference type="GO" id="GO:0005737">
    <property type="term" value="C:cytoplasm"/>
    <property type="evidence" value="ECO:0007669"/>
    <property type="project" value="UniProtKB-SubCell"/>
</dbReference>
<dbReference type="GO" id="GO:0005524">
    <property type="term" value="F:ATP binding"/>
    <property type="evidence" value="ECO:0007669"/>
    <property type="project" value="UniProtKB-KW"/>
</dbReference>
<dbReference type="GO" id="GO:0033862">
    <property type="term" value="F:UMP kinase activity"/>
    <property type="evidence" value="ECO:0007669"/>
    <property type="project" value="UniProtKB-EC"/>
</dbReference>
<dbReference type="GO" id="GO:0044210">
    <property type="term" value="P:'de novo' CTP biosynthetic process"/>
    <property type="evidence" value="ECO:0007669"/>
    <property type="project" value="UniProtKB-UniRule"/>
</dbReference>
<dbReference type="GO" id="GO:0006225">
    <property type="term" value="P:UDP biosynthetic process"/>
    <property type="evidence" value="ECO:0007669"/>
    <property type="project" value="TreeGrafter"/>
</dbReference>
<dbReference type="CDD" id="cd04253">
    <property type="entry name" value="AAK_UMPK-PyrH-Pf"/>
    <property type="match status" value="1"/>
</dbReference>
<dbReference type="Gene3D" id="3.40.1160.10">
    <property type="entry name" value="Acetylglutamate kinase-like"/>
    <property type="match status" value="1"/>
</dbReference>
<dbReference type="HAMAP" id="MF_01220_A">
    <property type="entry name" value="PyrH_A"/>
    <property type="match status" value="1"/>
</dbReference>
<dbReference type="InterPro" id="IPR036393">
    <property type="entry name" value="AceGlu_kinase-like_sf"/>
</dbReference>
<dbReference type="InterPro" id="IPR001048">
    <property type="entry name" value="Asp/Glu/Uridylate_kinase"/>
</dbReference>
<dbReference type="InterPro" id="IPR011817">
    <property type="entry name" value="Uridylate_kinase"/>
</dbReference>
<dbReference type="InterPro" id="IPR011818">
    <property type="entry name" value="Uridylate_kinase_arch/spir"/>
</dbReference>
<dbReference type="NCBIfam" id="TIGR02076">
    <property type="entry name" value="pyrH_arch"/>
    <property type="match status" value="1"/>
</dbReference>
<dbReference type="PANTHER" id="PTHR42833">
    <property type="entry name" value="URIDYLATE KINASE"/>
    <property type="match status" value="1"/>
</dbReference>
<dbReference type="PANTHER" id="PTHR42833:SF4">
    <property type="entry name" value="URIDYLATE KINASE PUMPKIN, CHLOROPLASTIC"/>
    <property type="match status" value="1"/>
</dbReference>
<dbReference type="Pfam" id="PF00696">
    <property type="entry name" value="AA_kinase"/>
    <property type="match status" value="1"/>
</dbReference>
<dbReference type="PIRSF" id="PIRSF005650">
    <property type="entry name" value="Uridylate_kin"/>
    <property type="match status" value="1"/>
</dbReference>
<dbReference type="SUPFAM" id="SSF53633">
    <property type="entry name" value="Carbamate kinase-like"/>
    <property type="match status" value="1"/>
</dbReference>
<sequence length="234" mass="24258">MKKIVISLGGSVLVPSLESNNIDRYVSVLKKISGTCRIFVVVGGGGEARRYIGVARSLGAGEAAADELGIMVTRLNARLLIAGLGDAAYPRVAENYTEAQEFAQAGKIVVMGGITPAQTTDAVSAVLAESVGAALLINATSVNGIYSADPKKDAGAVRHERLTPRELLDIITGSRMDAGANTVLDIVAGKVIERSGIPLLVLDGRDPENLYRAIVEGVCVGTVVCEEGSTPLPS</sequence>
<evidence type="ECO:0000255" key="1">
    <source>
        <dbReference type="HAMAP-Rule" id="MF_01220"/>
    </source>
</evidence>
<organism>
    <name type="scientific">Methanoculleus marisnigri (strain ATCC 35101 / DSM 1498 / JR1)</name>
    <dbReference type="NCBI Taxonomy" id="368407"/>
    <lineage>
        <taxon>Archaea</taxon>
        <taxon>Methanobacteriati</taxon>
        <taxon>Methanobacteriota</taxon>
        <taxon>Stenosarchaea group</taxon>
        <taxon>Methanomicrobia</taxon>
        <taxon>Methanomicrobiales</taxon>
        <taxon>Methanomicrobiaceae</taxon>
        <taxon>Methanoculleus</taxon>
    </lineage>
</organism>
<proteinExistence type="inferred from homology"/>
<comment type="function">
    <text evidence="1">Catalyzes the reversible phosphorylation of UMP to UDP.</text>
</comment>
<comment type="catalytic activity">
    <reaction evidence="1">
        <text>UMP + ATP = UDP + ADP</text>
        <dbReference type="Rhea" id="RHEA:24400"/>
        <dbReference type="ChEBI" id="CHEBI:30616"/>
        <dbReference type="ChEBI" id="CHEBI:57865"/>
        <dbReference type="ChEBI" id="CHEBI:58223"/>
        <dbReference type="ChEBI" id="CHEBI:456216"/>
        <dbReference type="EC" id="2.7.4.22"/>
    </reaction>
</comment>
<comment type="activity regulation">
    <text evidence="1">Inhibited by UTP.</text>
</comment>
<comment type="pathway">
    <text evidence="1">Pyrimidine metabolism; CTP biosynthesis via de novo pathway; UDP from UMP (UMPK route): step 1/1.</text>
</comment>
<comment type="subunit">
    <text evidence="1">Homohexamer.</text>
</comment>
<comment type="subcellular location">
    <subcellularLocation>
        <location evidence="1">Cytoplasm</location>
    </subcellularLocation>
</comment>
<comment type="similarity">
    <text evidence="1">Belongs to the UMP kinase family.</text>
</comment>
<reference key="1">
    <citation type="journal article" date="2009" name="Stand. Genomic Sci.">
        <title>Complete genome sequence of Methanoculleus marisnigri Romesser et al. 1981 type strain JR1.</title>
        <authorList>
            <person name="Anderson I.J."/>
            <person name="Sieprawska-Lupa M."/>
            <person name="Lapidus A."/>
            <person name="Nolan M."/>
            <person name="Copeland A."/>
            <person name="Glavina Del Rio T."/>
            <person name="Tice H."/>
            <person name="Dalin E."/>
            <person name="Barry K."/>
            <person name="Saunders E."/>
            <person name="Han C."/>
            <person name="Brettin T."/>
            <person name="Detter J.C."/>
            <person name="Bruce D."/>
            <person name="Mikhailova N."/>
            <person name="Pitluck S."/>
            <person name="Hauser L."/>
            <person name="Land M."/>
            <person name="Lucas S."/>
            <person name="Richardson P."/>
            <person name="Whitman W.B."/>
            <person name="Kyrpides N.C."/>
        </authorList>
    </citation>
    <scope>NUCLEOTIDE SEQUENCE [LARGE SCALE GENOMIC DNA]</scope>
    <source>
        <strain>ATCC 35101 / DSM 1498 / JR1</strain>
    </source>
</reference>
<gene>
    <name evidence="1" type="primary">pyrH</name>
    <name type="ordered locus">Memar_1036</name>
</gene>